<protein>
    <recommendedName>
        <fullName evidence="1">Potassium-transporting ATPase potassium-binding subunit</fullName>
    </recommendedName>
    <alternativeName>
        <fullName evidence="1">ATP phosphohydrolase [potassium-transporting] A chain</fullName>
    </alternativeName>
    <alternativeName>
        <fullName evidence="1">Potassium-binding and translocating subunit A</fullName>
    </alternativeName>
    <alternativeName>
        <fullName evidence="1">Potassium-translocating ATPase A chain</fullName>
    </alternativeName>
</protein>
<gene>
    <name evidence="1" type="primary">kdpA</name>
    <name type="ordered locus">Avi_6074</name>
</gene>
<keyword id="KW-0997">Cell inner membrane</keyword>
<keyword id="KW-1003">Cell membrane</keyword>
<keyword id="KW-0406">Ion transport</keyword>
<keyword id="KW-0472">Membrane</keyword>
<keyword id="KW-0630">Potassium</keyword>
<keyword id="KW-0633">Potassium transport</keyword>
<keyword id="KW-1185">Reference proteome</keyword>
<keyword id="KW-0812">Transmembrane</keyword>
<keyword id="KW-1133">Transmembrane helix</keyword>
<keyword id="KW-0813">Transport</keyword>
<accession>B9K2I3</accession>
<proteinExistence type="inferred from homology"/>
<sequence>MSSNGWLQIGLLLALVFLTIKPLGLYIACVFEGQRTFLSPILGPLERLLLRISGVDARREQGWLAYTLAMLAFNAAGFLALYGILRLQAYLPYNPQGFAGMTPDLAFNTAISFVTNTNWQAYSGEQSASHFSQMAGLAVQNFLSAATGIAIALAVTRAFARSAANTLGNFWVDMTRSTLYLLLPMSIVLALVFVWMGIPQTLDASVTATTLDGAQQTIALGPIASQEAIKQLGTNGGGFFNANAAHPFENPSAISDYFNILAMMSITMALIYAFGKMVGDLRQGWALIASVAVLLIAGIAAVYIAETAGNPIHLALGLDPSFGNMEGKEVRFGQAMSAAYTAITTGISNGGVNTMHGSLTPLGGLVPLFLIQLGEILPGGVGSGLYGLIVFCVLTVFVAGLMVGRTPEFLGKKIEAREMKFAMLAVLVLPFAILGFSAIAAVLPNALASLGNAGPHGLSEILYAYTSAAGNNGSAFAGLSANTAWYNTTLGISMALGRFAYAVPVLAIAGSLAAKTKGTASAGTFPTHTPLFVGLLVAIIIILGGLQYFPALALGPIAEHVGMLAGTLY</sequence>
<reference key="1">
    <citation type="journal article" date="2009" name="J. Bacteriol.">
        <title>Genome sequences of three Agrobacterium biovars help elucidate the evolution of multichromosome genomes in bacteria.</title>
        <authorList>
            <person name="Slater S.C."/>
            <person name="Goldman B.S."/>
            <person name="Goodner B."/>
            <person name="Setubal J.C."/>
            <person name="Farrand S.K."/>
            <person name="Nester E.W."/>
            <person name="Burr T.J."/>
            <person name="Banta L."/>
            <person name="Dickerman A.W."/>
            <person name="Paulsen I."/>
            <person name="Otten L."/>
            <person name="Suen G."/>
            <person name="Welch R."/>
            <person name="Almeida N.F."/>
            <person name="Arnold F."/>
            <person name="Burton O.T."/>
            <person name="Du Z."/>
            <person name="Ewing A."/>
            <person name="Godsy E."/>
            <person name="Heisel S."/>
            <person name="Houmiel K.L."/>
            <person name="Jhaveri J."/>
            <person name="Lu J."/>
            <person name="Miller N.M."/>
            <person name="Norton S."/>
            <person name="Chen Q."/>
            <person name="Phoolcharoen W."/>
            <person name="Ohlin V."/>
            <person name="Ondrusek D."/>
            <person name="Pride N."/>
            <person name="Stricklin S.L."/>
            <person name="Sun J."/>
            <person name="Wheeler C."/>
            <person name="Wilson L."/>
            <person name="Zhu H."/>
            <person name="Wood D.W."/>
        </authorList>
    </citation>
    <scope>NUCLEOTIDE SEQUENCE [LARGE SCALE GENOMIC DNA]</scope>
    <source>
        <strain>ATCC BAA-846 / DSM 112012 / S4</strain>
    </source>
</reference>
<evidence type="ECO:0000255" key="1">
    <source>
        <dbReference type="HAMAP-Rule" id="MF_00275"/>
    </source>
</evidence>
<organism>
    <name type="scientific">Allorhizobium ampelinum (strain ATCC BAA-846 / DSM 112012 / S4)</name>
    <name type="common">Agrobacterium vitis (strain S4)</name>
    <dbReference type="NCBI Taxonomy" id="311402"/>
    <lineage>
        <taxon>Bacteria</taxon>
        <taxon>Pseudomonadati</taxon>
        <taxon>Pseudomonadota</taxon>
        <taxon>Alphaproteobacteria</taxon>
        <taxon>Hyphomicrobiales</taxon>
        <taxon>Rhizobiaceae</taxon>
        <taxon>Rhizobium/Agrobacterium group</taxon>
        <taxon>Allorhizobium</taxon>
        <taxon>Allorhizobium ampelinum</taxon>
    </lineage>
</organism>
<feature type="chain" id="PRO_1000190728" description="Potassium-transporting ATPase potassium-binding subunit">
    <location>
        <begin position="1"/>
        <end position="569"/>
    </location>
</feature>
<feature type="transmembrane region" description="Helical" evidence="1">
    <location>
        <begin position="11"/>
        <end position="31"/>
    </location>
</feature>
<feature type="transmembrane region" description="Helical" evidence="1">
    <location>
        <begin position="64"/>
        <end position="84"/>
    </location>
</feature>
<feature type="transmembrane region" description="Helical" evidence="1">
    <location>
        <begin position="135"/>
        <end position="155"/>
    </location>
</feature>
<feature type="transmembrane region" description="Helical" evidence="1">
    <location>
        <begin position="179"/>
        <end position="199"/>
    </location>
</feature>
<feature type="transmembrane region" description="Helical" evidence="1">
    <location>
        <begin position="258"/>
        <end position="278"/>
    </location>
</feature>
<feature type="transmembrane region" description="Helical" evidence="1">
    <location>
        <begin position="285"/>
        <end position="305"/>
    </location>
</feature>
<feature type="transmembrane region" description="Helical" evidence="1">
    <location>
        <begin position="384"/>
        <end position="404"/>
    </location>
</feature>
<feature type="transmembrane region" description="Helical" evidence="1">
    <location>
        <begin position="423"/>
        <end position="443"/>
    </location>
</feature>
<feature type="transmembrane region" description="Helical" evidence="1">
    <location>
        <begin position="490"/>
        <end position="510"/>
    </location>
</feature>
<feature type="transmembrane region" description="Helical" evidence="1">
    <location>
        <begin position="531"/>
        <end position="551"/>
    </location>
</feature>
<dbReference type="EMBL" id="CP000634">
    <property type="protein sequence ID" value="ACM39081.1"/>
    <property type="molecule type" value="Genomic_DNA"/>
</dbReference>
<dbReference type="RefSeq" id="WP_012654323.1">
    <property type="nucleotide sequence ID" value="NC_011988.1"/>
</dbReference>
<dbReference type="SMR" id="B9K2I3"/>
<dbReference type="STRING" id="311402.Avi_6074"/>
<dbReference type="KEGG" id="avi:Avi_6074"/>
<dbReference type="eggNOG" id="COG2060">
    <property type="taxonomic scope" value="Bacteria"/>
</dbReference>
<dbReference type="HOGENOM" id="CLU_018614_3_0_5"/>
<dbReference type="Proteomes" id="UP000001596">
    <property type="component" value="Chromosome 2"/>
</dbReference>
<dbReference type="GO" id="GO:0005886">
    <property type="term" value="C:plasma membrane"/>
    <property type="evidence" value="ECO:0007669"/>
    <property type="project" value="UniProtKB-SubCell"/>
</dbReference>
<dbReference type="GO" id="GO:0008556">
    <property type="term" value="F:P-type potassium transmembrane transporter activity"/>
    <property type="evidence" value="ECO:0007669"/>
    <property type="project" value="InterPro"/>
</dbReference>
<dbReference type="GO" id="GO:0030955">
    <property type="term" value="F:potassium ion binding"/>
    <property type="evidence" value="ECO:0007669"/>
    <property type="project" value="UniProtKB-UniRule"/>
</dbReference>
<dbReference type="HAMAP" id="MF_00275">
    <property type="entry name" value="KdpA"/>
    <property type="match status" value="1"/>
</dbReference>
<dbReference type="InterPro" id="IPR004623">
    <property type="entry name" value="KdpA"/>
</dbReference>
<dbReference type="NCBIfam" id="TIGR00680">
    <property type="entry name" value="kdpA"/>
    <property type="match status" value="1"/>
</dbReference>
<dbReference type="PANTHER" id="PTHR30607">
    <property type="entry name" value="POTASSIUM-TRANSPORTING ATPASE A CHAIN"/>
    <property type="match status" value="1"/>
</dbReference>
<dbReference type="PANTHER" id="PTHR30607:SF2">
    <property type="entry name" value="POTASSIUM-TRANSPORTING ATPASE POTASSIUM-BINDING SUBUNIT"/>
    <property type="match status" value="1"/>
</dbReference>
<dbReference type="Pfam" id="PF03814">
    <property type="entry name" value="KdpA"/>
    <property type="match status" value="1"/>
</dbReference>
<dbReference type="PIRSF" id="PIRSF001294">
    <property type="entry name" value="K_ATPaseA"/>
    <property type="match status" value="1"/>
</dbReference>
<name>KDPA_ALLAM</name>
<comment type="function">
    <text evidence="1">Part of the high-affinity ATP-driven potassium transport (or Kdp) system, which catalyzes the hydrolysis of ATP coupled with the electrogenic transport of potassium into the cytoplasm. This subunit binds the periplasmic potassium ions and delivers the ions to the membrane domain of KdpB through an intramembrane tunnel.</text>
</comment>
<comment type="subunit">
    <text evidence="1">The system is composed of three essential subunits: KdpA, KdpB and KdpC.</text>
</comment>
<comment type="subcellular location">
    <subcellularLocation>
        <location evidence="1">Cell inner membrane</location>
        <topology evidence="1">Multi-pass membrane protein</topology>
    </subcellularLocation>
</comment>
<comment type="similarity">
    <text evidence="1">Belongs to the KdpA family.</text>
</comment>